<protein>
    <recommendedName>
        <fullName>Light-harvesting protein B-880 alpha chain</fullName>
    </recommendedName>
    <alternativeName>
        <fullName>Antenna pigment protein alpha chain</fullName>
    </alternativeName>
</protein>
<proteinExistence type="evidence at protein level"/>
<name>LHA_AFIMA</name>
<organism>
    <name type="scientific">Afifella marina</name>
    <name type="common">Rhodobium marinum</name>
    <name type="synonym">Rhodopseudomonas marina</name>
    <dbReference type="NCBI Taxonomy" id="1080"/>
    <lineage>
        <taxon>Bacteria</taxon>
        <taxon>Pseudomonadati</taxon>
        <taxon>Pseudomonadota</taxon>
        <taxon>Alphaproteobacteria</taxon>
        <taxon>Hyphomicrobiales</taxon>
        <taxon>Afifellaceae</taxon>
        <taxon>Afifella</taxon>
    </lineage>
</organism>
<reference key="1">
    <citation type="journal article" date="1989" name="Z. Naturforsch. C">
        <title>The primary structures of the core antenna polypeptides from Rhodopseudomonas marina.</title>
        <authorList>
            <person name="Brunisholz R.A."/>
            <person name="Bissig I."/>
            <person name="Wagner-Huber R."/>
            <person name="Frank G."/>
            <person name="Suter F."/>
            <person name="Niederer E."/>
            <person name="Zuber H."/>
        </authorList>
    </citation>
    <scope>PROTEIN SEQUENCE</scope>
    <source>
        <strain>ATCC 35675 / DSM 2698 / NBRC 100434 / NCIMB 2201 / BN 126</strain>
    </source>
</reference>
<accession>P80259</accession>
<evidence type="ECO:0000255" key="1"/>
<evidence type="ECO:0000305" key="2"/>
<keyword id="KW-0042">Antenna complex</keyword>
<keyword id="KW-0076">Bacteriochlorophyll</keyword>
<keyword id="KW-0997">Cell inner membrane</keyword>
<keyword id="KW-1003">Cell membrane</keyword>
<keyword id="KW-0148">Chlorophyll</keyword>
<keyword id="KW-0157">Chromophore</keyword>
<keyword id="KW-0903">Direct protein sequencing</keyword>
<keyword id="KW-0437">Light-harvesting polypeptide</keyword>
<keyword id="KW-0460">Magnesium</keyword>
<keyword id="KW-0472">Membrane</keyword>
<keyword id="KW-0479">Metal-binding</keyword>
<keyword id="KW-0812">Transmembrane</keyword>
<keyword id="KW-1133">Transmembrane helix</keyword>
<dbReference type="SMR" id="P80259"/>
<dbReference type="GO" id="GO:0019866">
    <property type="term" value="C:organelle inner membrane"/>
    <property type="evidence" value="ECO:0007669"/>
    <property type="project" value="InterPro"/>
</dbReference>
<dbReference type="GO" id="GO:0005886">
    <property type="term" value="C:plasma membrane"/>
    <property type="evidence" value="ECO:0007669"/>
    <property type="project" value="UniProtKB-SubCell"/>
</dbReference>
<dbReference type="GO" id="GO:0030077">
    <property type="term" value="C:plasma membrane light-harvesting complex"/>
    <property type="evidence" value="ECO:0007669"/>
    <property type="project" value="InterPro"/>
</dbReference>
<dbReference type="GO" id="GO:0042314">
    <property type="term" value="F:bacteriochlorophyll binding"/>
    <property type="evidence" value="ECO:0007669"/>
    <property type="project" value="UniProtKB-KW"/>
</dbReference>
<dbReference type="GO" id="GO:0045156">
    <property type="term" value="F:electron transporter, transferring electrons within the cyclic electron transport pathway of photosynthesis activity"/>
    <property type="evidence" value="ECO:0007669"/>
    <property type="project" value="InterPro"/>
</dbReference>
<dbReference type="GO" id="GO:0046872">
    <property type="term" value="F:metal ion binding"/>
    <property type="evidence" value="ECO:0007669"/>
    <property type="project" value="UniProtKB-KW"/>
</dbReference>
<dbReference type="GO" id="GO:0019684">
    <property type="term" value="P:photosynthesis, light reaction"/>
    <property type="evidence" value="ECO:0007669"/>
    <property type="project" value="InterPro"/>
</dbReference>
<dbReference type="Gene3D" id="4.10.220.20">
    <property type="entry name" value="Light-harvesting complex"/>
    <property type="match status" value="1"/>
</dbReference>
<dbReference type="InterPro" id="IPR000066">
    <property type="entry name" value="Antenna_a/b"/>
</dbReference>
<dbReference type="InterPro" id="IPR018332">
    <property type="entry name" value="Antenna_alpha"/>
</dbReference>
<dbReference type="InterPro" id="IPR002361">
    <property type="entry name" value="Antenna_alpha_CS"/>
</dbReference>
<dbReference type="InterPro" id="IPR035889">
    <property type="entry name" value="Light-harvesting_complex"/>
</dbReference>
<dbReference type="NCBIfam" id="NF040861">
    <property type="entry name" value="pufA_517_ASD"/>
    <property type="match status" value="1"/>
</dbReference>
<dbReference type="Pfam" id="PF00556">
    <property type="entry name" value="LHC"/>
    <property type="match status" value="1"/>
</dbReference>
<dbReference type="PRINTS" id="PR00673">
    <property type="entry name" value="LIGHTHARVSTA"/>
</dbReference>
<dbReference type="SUPFAM" id="SSF56918">
    <property type="entry name" value="Light-harvesting complex subunits"/>
    <property type="match status" value="1"/>
</dbReference>
<dbReference type="PROSITE" id="PS00968">
    <property type="entry name" value="ANTENNA_COMP_ALPHA"/>
    <property type="match status" value="1"/>
</dbReference>
<comment type="function">
    <text>Antenna complexes are light-harvesting systems, which transfer the excitation energy to the reaction centers.</text>
</comment>
<comment type="subunit">
    <text>The core complex is formed by different alpha and beta chains, binding bacteriochlorophyll molecules, and arranged most probably in tetrameric structures disposed around the reaction center. The non-pigmented gamma chains may constitute additional components.</text>
</comment>
<comment type="subcellular location">
    <subcellularLocation>
        <location>Cell inner membrane</location>
        <topology>Single-pass type II membrane protein</topology>
    </subcellularLocation>
</comment>
<comment type="similarity">
    <text evidence="2">Belongs to the antenna complex alpha subunit family.</text>
</comment>
<sequence length="52" mass="6095">MWKVWLLFDPRRTLVALFTFLFVLALLIHFILLSTDRFNWMQGAPTAPAQTS</sequence>
<feature type="chain" id="PRO_0000099794" description="Light-harvesting protein B-880 alpha chain">
    <location>
        <begin position="1"/>
        <end position="52"/>
    </location>
</feature>
<feature type="topological domain" description="Cytoplasmic" evidence="1">
    <location>
        <begin position="1"/>
        <end position="12"/>
    </location>
</feature>
<feature type="transmembrane region" description="Helical" evidence="1">
    <location>
        <begin position="13"/>
        <end position="33"/>
    </location>
</feature>
<feature type="topological domain" description="Periplasmic" evidence="1">
    <location>
        <begin position="34"/>
        <end position="52"/>
    </location>
</feature>
<feature type="binding site" description="axial binding residue" evidence="1">
    <location>
        <position position="29"/>
    </location>
    <ligand>
        <name>a bacteriochlorophyll</name>
        <dbReference type="ChEBI" id="CHEBI:38201"/>
    </ligand>
    <ligandPart>
        <name>Mg</name>
        <dbReference type="ChEBI" id="CHEBI:25107"/>
    </ligandPart>
</feature>